<keyword id="KW-0150">Chloroplast</keyword>
<keyword id="KW-0396">Initiation factor</keyword>
<keyword id="KW-0934">Plastid</keyword>
<keyword id="KW-0648">Protein biosynthesis</keyword>
<keyword id="KW-0694">RNA-binding</keyword>
<keyword id="KW-0699">rRNA-binding</keyword>
<dbReference type="EMBL" id="AE009947">
    <property type="protein sequence ID" value="AAT44726.1"/>
    <property type="molecule type" value="Genomic_DNA"/>
</dbReference>
<dbReference type="SMR" id="Q6L367"/>
<dbReference type="GO" id="GO:0009507">
    <property type="term" value="C:chloroplast"/>
    <property type="evidence" value="ECO:0007669"/>
    <property type="project" value="UniProtKB-SubCell"/>
</dbReference>
<dbReference type="GO" id="GO:0005829">
    <property type="term" value="C:cytosol"/>
    <property type="evidence" value="ECO:0007669"/>
    <property type="project" value="TreeGrafter"/>
</dbReference>
<dbReference type="GO" id="GO:0043022">
    <property type="term" value="F:ribosome binding"/>
    <property type="evidence" value="ECO:0007669"/>
    <property type="project" value="UniProtKB-UniRule"/>
</dbReference>
<dbReference type="GO" id="GO:0019843">
    <property type="term" value="F:rRNA binding"/>
    <property type="evidence" value="ECO:0007669"/>
    <property type="project" value="UniProtKB-UniRule"/>
</dbReference>
<dbReference type="GO" id="GO:0003743">
    <property type="term" value="F:translation initiation factor activity"/>
    <property type="evidence" value="ECO:0007669"/>
    <property type="project" value="UniProtKB-UniRule"/>
</dbReference>
<dbReference type="CDD" id="cd04451">
    <property type="entry name" value="S1_IF1"/>
    <property type="match status" value="1"/>
</dbReference>
<dbReference type="FunFam" id="2.40.50.140:FF:000019">
    <property type="entry name" value="Translation initiation factor IF-1, chloroplastic"/>
    <property type="match status" value="1"/>
</dbReference>
<dbReference type="Gene3D" id="2.40.50.140">
    <property type="entry name" value="Nucleic acid-binding proteins"/>
    <property type="match status" value="1"/>
</dbReference>
<dbReference type="HAMAP" id="MF_00075">
    <property type="entry name" value="IF_1"/>
    <property type="match status" value="1"/>
</dbReference>
<dbReference type="InterPro" id="IPR012340">
    <property type="entry name" value="NA-bd_OB-fold"/>
</dbReference>
<dbReference type="InterPro" id="IPR006196">
    <property type="entry name" value="RNA-binding_domain_S1_IF1"/>
</dbReference>
<dbReference type="InterPro" id="IPR003029">
    <property type="entry name" value="S1_domain"/>
</dbReference>
<dbReference type="InterPro" id="IPR004368">
    <property type="entry name" value="TIF_IF1"/>
</dbReference>
<dbReference type="NCBIfam" id="TIGR00008">
    <property type="entry name" value="infA"/>
    <property type="match status" value="1"/>
</dbReference>
<dbReference type="PANTHER" id="PTHR33370">
    <property type="entry name" value="TRANSLATION INITIATION FACTOR IF-1, CHLOROPLASTIC"/>
    <property type="match status" value="1"/>
</dbReference>
<dbReference type="PANTHER" id="PTHR33370:SF1">
    <property type="entry name" value="TRANSLATION INITIATION FACTOR IF-1, CHLOROPLASTIC"/>
    <property type="match status" value="1"/>
</dbReference>
<dbReference type="Pfam" id="PF01176">
    <property type="entry name" value="eIF-1a"/>
    <property type="match status" value="1"/>
</dbReference>
<dbReference type="SMART" id="SM00316">
    <property type="entry name" value="S1"/>
    <property type="match status" value="1"/>
</dbReference>
<dbReference type="SUPFAM" id="SSF50249">
    <property type="entry name" value="Nucleic acid-binding proteins"/>
    <property type="match status" value="1"/>
</dbReference>
<dbReference type="PROSITE" id="PS50832">
    <property type="entry name" value="S1_IF1_TYPE"/>
    <property type="match status" value="1"/>
</dbReference>
<proteinExistence type="inferred from homology"/>
<gene>
    <name evidence="1" type="primary">infA</name>
    <name type="ordered locus">PS160</name>
</gene>
<feature type="chain" id="PRO_0000095949" description="Translation initiation factor IF-1, chloroplastic">
    <location>
        <begin position="1"/>
        <end position="107"/>
    </location>
</feature>
<feature type="domain" description="S1-like" evidence="1">
    <location>
        <begin position="8"/>
        <end position="83"/>
    </location>
</feature>
<feature type="region of interest" description="Disordered" evidence="2">
    <location>
        <begin position="81"/>
        <end position="107"/>
    </location>
</feature>
<feature type="compositionally biased region" description="Basic and acidic residues" evidence="2">
    <location>
        <begin position="83"/>
        <end position="107"/>
    </location>
</feature>
<reference key="1">
    <citation type="journal article" date="2004" name="Curr. Genet.">
        <title>Structural features and transcript-editing analysis of sugarcane (Saccharum officinarum L.) chloroplast genome.</title>
        <authorList>
            <person name="Calsa T. Jr."/>
            <person name="Carraro D.M."/>
            <person name="Benatti M.R."/>
            <person name="Barbosa A.C."/>
            <person name="Kitajima J.P."/>
            <person name="Carrer H."/>
        </authorList>
    </citation>
    <scope>NUCLEOTIDE SEQUENCE [LARGE SCALE GENOMIC DNA]</scope>
    <source>
        <strain>cv. SP-80-3280</strain>
    </source>
</reference>
<protein>
    <recommendedName>
        <fullName evidence="1">Translation initiation factor IF-1, chloroplastic</fullName>
    </recommendedName>
</protein>
<geneLocation type="chloroplast"/>
<organism>
    <name type="scientific">Saccharum hybrid</name>
    <name type="common">Sugarcane</name>
    <dbReference type="NCBI Taxonomy" id="15819"/>
    <lineage>
        <taxon>Eukaryota</taxon>
        <taxon>Viridiplantae</taxon>
        <taxon>Streptophyta</taxon>
        <taxon>Embryophyta</taxon>
        <taxon>Tracheophyta</taxon>
        <taxon>Spermatophyta</taxon>
        <taxon>Magnoliopsida</taxon>
        <taxon>Liliopsida</taxon>
        <taxon>Poales</taxon>
        <taxon>Poaceae</taxon>
        <taxon>PACMAD clade</taxon>
        <taxon>Panicoideae</taxon>
        <taxon>Andropogonodae</taxon>
        <taxon>Andropogoneae</taxon>
        <taxon>Saccharinae</taxon>
        <taxon>Saccharum</taxon>
    </lineage>
</organism>
<sequence length="107" mass="12431">MTEKKNRREKKNPREAKVTFEGLVTEALPNGMFRVRLENDTIILGYISGKIRSSSIRILMGDRVKIEVSRYDSSKGRIIYRLPHKDSKRTEDSKDTEDLKDTKDSKD</sequence>
<evidence type="ECO:0000255" key="1">
    <source>
        <dbReference type="HAMAP-Rule" id="MF_00075"/>
    </source>
</evidence>
<evidence type="ECO:0000256" key="2">
    <source>
        <dbReference type="SAM" id="MobiDB-lite"/>
    </source>
</evidence>
<comment type="function">
    <text evidence="1">One of the essential components for the initiation of protein synthesis. Stabilizes the binding of IF-2 and IF-3 on the 30S subunit to which N-formylmethionyl-tRNA(fMet) subsequently binds. Helps modulate mRNA selection, yielding the 30S pre-initiation complex (PIC). Upon addition of the 50S ribosomal subunit IF-1, IF-2 and IF-3 are released leaving the mature 70S translation initiation complex.</text>
</comment>
<comment type="subunit">
    <text evidence="1">Component of the 30S ribosomal translation pre-initiation complex which assembles on the 30S ribosome in the order IF-2 and IF-3, IF-1 and N-formylmethionyl-tRNA(fMet); mRNA recruitment can occur at any time during PIC assembly.</text>
</comment>
<comment type="subcellular location">
    <subcellularLocation>
        <location evidence="1">Plastid</location>
        <location evidence="1">Chloroplast</location>
    </subcellularLocation>
</comment>
<comment type="similarity">
    <text evidence="1">Belongs to the IF-1 family.</text>
</comment>
<name>IF1C_SACHY</name>
<accession>Q6L367</accession>